<reference key="1">
    <citation type="journal article" date="2003" name="Phytochemistry">
        <title>Developmental and inducible accumulation of gene transcripts involved in alkaloid biosynthesis in opium poppy.</title>
        <authorList>
            <person name="Facchini P.J."/>
            <person name="Park S.U."/>
        </authorList>
    </citation>
    <scope>NUCLEOTIDE SEQUENCE [MRNA]</scope>
    <scope>TISSUE SPECIFICITY</scope>
    <scope>DEVELOPMENTAL STAGE</scope>
    <scope>INDUCTION BY ELICITOR AND WOUNDING</scope>
    <source>
        <strain>cv. Marianne</strain>
    </source>
</reference>
<reference key="2">
    <citation type="journal article" date="2006" name="Plant J.">
        <title>The role of phloem sieve elements and laticifers in the biosynthesis and accumulation of alkaloids in opium poppy.</title>
        <authorList>
            <person name="Samanani N."/>
            <person name="Alcantara J."/>
            <person name="Bourgault R."/>
            <person name="Zulak K.G."/>
            <person name="Facchini P.J."/>
        </authorList>
    </citation>
    <scope>TISSUE SPECIFICITY</scope>
    <scope>SUBCELLULAR LOCATION</scope>
    <scope>DEVELOPMENTAL STAGE</scope>
</reference>
<reference key="3">
    <citation type="journal article" date="2012" name="Plant J.">
        <title>Systematic silencing of benzylisoquinoline alkaloid biosynthetic genes reveals the major route to papaverine in opium poppy.</title>
        <authorList>
            <person name="Desgagne-Penix I."/>
            <person name="Facchini P.J."/>
        </authorList>
    </citation>
    <scope>FUNCTION</scope>
    <scope>CATALYTIC ACTIVITY</scope>
</reference>
<dbReference type="EC" id="2.1.1.140" evidence="4"/>
<dbReference type="EMBL" id="AY217336">
    <property type="protein sequence ID" value="AAP45316.1"/>
    <property type="molecule type" value="mRNA"/>
</dbReference>
<dbReference type="SMR" id="Q7XB08"/>
<dbReference type="BRENDA" id="2.1.1.140">
    <property type="organism ID" value="4515"/>
</dbReference>
<dbReference type="UniPathway" id="UPA00306">
    <property type="reaction ID" value="UER00442"/>
</dbReference>
<dbReference type="PRO" id="PR:Q7XB08"/>
<dbReference type="GO" id="GO:0005737">
    <property type="term" value="C:cytoplasm"/>
    <property type="evidence" value="ECO:0007669"/>
    <property type="project" value="UniProtKB-SubCell"/>
</dbReference>
<dbReference type="GO" id="GO:0030794">
    <property type="term" value="F:(S)-coclaurine-N-methyltransferase activity"/>
    <property type="evidence" value="ECO:0000315"/>
    <property type="project" value="UniProtKB"/>
</dbReference>
<dbReference type="GO" id="GO:1901012">
    <property type="term" value="P:(S)-reticuline biosynthetic process"/>
    <property type="evidence" value="ECO:0000315"/>
    <property type="project" value="UniProtKB"/>
</dbReference>
<dbReference type="GO" id="GO:0032259">
    <property type="term" value="P:methylation"/>
    <property type="evidence" value="ECO:0007669"/>
    <property type="project" value="UniProtKB-KW"/>
</dbReference>
<dbReference type="GO" id="GO:0002238">
    <property type="term" value="P:response to molecule of fungal origin"/>
    <property type="evidence" value="ECO:0000314"/>
    <property type="project" value="UniProtKB"/>
</dbReference>
<dbReference type="GO" id="GO:0009611">
    <property type="term" value="P:response to wounding"/>
    <property type="evidence" value="ECO:0000314"/>
    <property type="project" value="UniProtKB"/>
</dbReference>
<dbReference type="CDD" id="cd02440">
    <property type="entry name" value="AdoMet_MTases"/>
    <property type="match status" value="1"/>
</dbReference>
<dbReference type="FunFam" id="3.40.50.150:FF:000554">
    <property type="entry name" value="Cation-transporting ATPase"/>
    <property type="match status" value="1"/>
</dbReference>
<dbReference type="Gene3D" id="3.40.50.150">
    <property type="entry name" value="Vaccinia Virus protein VP39"/>
    <property type="match status" value="1"/>
</dbReference>
<dbReference type="InterPro" id="IPR029063">
    <property type="entry name" value="SAM-dependent_MTases_sf"/>
</dbReference>
<dbReference type="PANTHER" id="PTHR43832">
    <property type="match status" value="1"/>
</dbReference>
<dbReference type="PANTHER" id="PTHR43832:SF1">
    <property type="entry name" value="S-ADENOSYL-L-METHIONINE-DEPENDENT METHYLTRANSFERASES SUPERFAMILY PROTEIN"/>
    <property type="match status" value="1"/>
</dbReference>
<dbReference type="Pfam" id="PF02353">
    <property type="entry name" value="CMAS"/>
    <property type="match status" value="1"/>
</dbReference>
<dbReference type="SUPFAM" id="SSF53335">
    <property type="entry name" value="S-adenosyl-L-methionine-dependent methyltransferases"/>
    <property type="match status" value="1"/>
</dbReference>
<gene>
    <name evidence="5" type="primary">CNMT</name>
</gene>
<comment type="function">
    <text evidence="4">Involved in the biosynthesis of benzylisoquinoline alkaloids. N-methyltransferase methylating (S)-coclaurine. 4'-O-methylcoclaurine and norlaudanine can also be used as substrates.</text>
</comment>
<comment type="catalytic activity">
    <reaction evidence="4">
        <text>(S)-coclaurine + S-adenosyl-L-methionine = (S)-N-methylcoclaurine + S-adenosyl-L-homocysteine + H(+)</text>
        <dbReference type="Rhea" id="RHEA:17409"/>
        <dbReference type="ChEBI" id="CHEBI:15378"/>
        <dbReference type="ChEBI" id="CHEBI:57581"/>
        <dbReference type="ChEBI" id="CHEBI:57856"/>
        <dbReference type="ChEBI" id="CHEBI:57993"/>
        <dbReference type="ChEBI" id="CHEBI:59789"/>
        <dbReference type="EC" id="2.1.1.140"/>
    </reaction>
</comment>
<comment type="pathway">
    <text>Alkaloid biosynthesis; (S)-reticuline biosynthesis; (S)-reticuline from (S)-norcoclaurine: step 2/4.</text>
</comment>
<comment type="subcellular location">
    <subcellularLocation>
        <location evidence="3">Cytoplasm</location>
    </subcellularLocation>
</comment>
<comment type="tissue specificity">
    <text evidence="2 3">Expressed in roots, stems, flower buds and at lower levels, in leaves (PubMed:12946416, PubMed:16813579). Restricted to sieve elements of the phloem adjacent or proximal to laticifers (PubMed:16813579).</text>
</comment>
<comment type="developmental stage">
    <text evidence="2 3">Transiently induced from 4 to 7 days after seed imbibition.</text>
</comment>
<comment type="induction">
    <text evidence="2">Up-regulated upon fungal elicitor treatment or wounding.</text>
</comment>
<comment type="similarity">
    <text evidence="6">Belongs to the CFA/CMAS family.</text>
</comment>
<organism evidence="7">
    <name type="scientific">Papaver somniferum</name>
    <name type="common">Opium poppy</name>
    <dbReference type="NCBI Taxonomy" id="3469"/>
    <lineage>
        <taxon>Eukaryota</taxon>
        <taxon>Viridiplantae</taxon>
        <taxon>Streptophyta</taxon>
        <taxon>Embryophyta</taxon>
        <taxon>Tracheophyta</taxon>
        <taxon>Spermatophyta</taxon>
        <taxon>Magnoliopsida</taxon>
        <taxon>Ranunculales</taxon>
        <taxon>Papaveraceae</taxon>
        <taxon>Papaveroideae</taxon>
        <taxon>Papaver</taxon>
    </lineage>
</organism>
<name>CNMT_PAPSO</name>
<feature type="chain" id="PRO_0000433981" description="(S)-coclaurine N-methyltransferase">
    <location>
        <begin position="1"/>
        <end position="351"/>
    </location>
</feature>
<feature type="active site" evidence="6">
    <location>
        <position position="326"/>
    </location>
</feature>
<feature type="binding site" evidence="1">
    <location>
        <begin position="91"/>
        <end position="92"/>
    </location>
    <ligand>
        <name>S-adenosyl-L-methionine</name>
        <dbReference type="ChEBI" id="CHEBI:59789"/>
    </ligand>
</feature>
<feature type="binding site" evidence="1">
    <location>
        <begin position="126"/>
        <end position="134"/>
    </location>
    <ligand>
        <name>S-adenosyl-L-methionine</name>
        <dbReference type="ChEBI" id="CHEBI:59789"/>
    </ligand>
</feature>
<feature type="binding site" evidence="1">
    <location>
        <begin position="130"/>
        <end position="132"/>
    </location>
    <ligand>
        <name>S-adenosyl-L-methionine</name>
        <dbReference type="ChEBI" id="CHEBI:59789"/>
    </ligand>
</feature>
<feature type="binding site" evidence="1">
    <location>
        <begin position="153"/>
        <end position="158"/>
    </location>
    <ligand>
        <name>S-adenosyl-L-methionine</name>
        <dbReference type="ChEBI" id="CHEBI:59789"/>
    </ligand>
</feature>
<sequence length="351" mass="41032">MQLKAKEELLRNMELGLIPDQEIRQLIRVELEKRLQWGYKETHEEQLSQLLDLVHSLKGMKMATEMENLDLKLYEAPMEFLKIQHGSNMKQSAGYYTDESTTLDEAEIAMLDLYMERAQIKDGQSVLDLGCGLGAVALFGANKFKKCQFTGVTSSVEQKDYIEGKCKELKLTNVKVLLADITTYETEERFDRIFAVELIEHMKNYQLLLKKISEWMKDDGLLFVEHVCHKTLAYHYEPVDAEDWYTNYIFPAGTLTLSSASMLLYFQDDVSVVNQWTLSGKHYSRSHEEWLKNMDKNIVEFKEIMRSITKTEKEAIKLLNFWRIFCMCGAELFGYKNGEEWMLTHLLFKKK</sequence>
<proteinExistence type="evidence at protein level"/>
<evidence type="ECO:0000250" key="1">
    <source>
        <dbReference type="UniProtKB" id="Q79FX6"/>
    </source>
</evidence>
<evidence type="ECO:0000269" key="2">
    <source>
    </source>
</evidence>
<evidence type="ECO:0000269" key="3">
    <source>
    </source>
</evidence>
<evidence type="ECO:0000269" key="4">
    <source>
    </source>
</evidence>
<evidence type="ECO:0000303" key="5">
    <source>
    </source>
</evidence>
<evidence type="ECO:0000305" key="6"/>
<evidence type="ECO:0000312" key="7">
    <source>
        <dbReference type="EMBL" id="AAP45316.1"/>
    </source>
</evidence>
<accession>Q7XB08</accession>
<keyword id="KW-0017">Alkaloid metabolism</keyword>
<keyword id="KW-0963">Cytoplasm</keyword>
<keyword id="KW-0489">Methyltransferase</keyword>
<keyword id="KW-0949">S-adenosyl-L-methionine</keyword>
<keyword id="KW-0808">Transferase</keyword>
<protein>
    <recommendedName>
        <fullName evidence="5">(S)-coclaurine N-methyltransferase</fullName>
        <shortName evidence="5">PsCNMT</shortName>
        <ecNumber evidence="4">2.1.1.140</ecNumber>
    </recommendedName>
</protein>